<gene>
    <name evidence="1" type="primary">cysD</name>
    <name type="ordered locus">ABAYE2791</name>
</gene>
<reference key="1">
    <citation type="journal article" date="2008" name="PLoS ONE">
        <title>Comparative analysis of Acinetobacters: three genomes for three lifestyles.</title>
        <authorList>
            <person name="Vallenet D."/>
            <person name="Nordmann P."/>
            <person name="Barbe V."/>
            <person name="Poirel L."/>
            <person name="Mangenot S."/>
            <person name="Bataille E."/>
            <person name="Dossat C."/>
            <person name="Gas S."/>
            <person name="Kreimeyer A."/>
            <person name="Lenoble P."/>
            <person name="Oztas S."/>
            <person name="Poulain J."/>
            <person name="Segurens B."/>
            <person name="Robert C."/>
            <person name="Abergel C."/>
            <person name="Claverie J.-M."/>
            <person name="Raoult D."/>
            <person name="Medigue C."/>
            <person name="Weissenbach J."/>
            <person name="Cruveiller S."/>
        </authorList>
    </citation>
    <scope>NUCLEOTIDE SEQUENCE [LARGE SCALE GENOMIC DNA]</scope>
    <source>
        <strain>AYE</strain>
    </source>
</reference>
<dbReference type="EC" id="2.7.7.4" evidence="1"/>
<dbReference type="EMBL" id="CU459141">
    <property type="protein sequence ID" value="CAM87620.1"/>
    <property type="molecule type" value="Genomic_DNA"/>
</dbReference>
<dbReference type="SMR" id="B0V9N5"/>
<dbReference type="EnsemblBacteria" id="CAM87620">
    <property type="protein sequence ID" value="CAM87620"/>
    <property type="gene ID" value="ABAYE2791"/>
</dbReference>
<dbReference type="KEGG" id="aby:ABAYE2791"/>
<dbReference type="HOGENOM" id="CLU_043026_0_0_6"/>
<dbReference type="UniPathway" id="UPA00140">
    <property type="reaction ID" value="UER00204"/>
</dbReference>
<dbReference type="GO" id="GO:0005524">
    <property type="term" value="F:ATP binding"/>
    <property type="evidence" value="ECO:0007669"/>
    <property type="project" value="UniProtKB-KW"/>
</dbReference>
<dbReference type="GO" id="GO:0004781">
    <property type="term" value="F:sulfate adenylyltransferase (ATP) activity"/>
    <property type="evidence" value="ECO:0007669"/>
    <property type="project" value="UniProtKB-UniRule"/>
</dbReference>
<dbReference type="GO" id="GO:0070814">
    <property type="term" value="P:hydrogen sulfide biosynthetic process"/>
    <property type="evidence" value="ECO:0007669"/>
    <property type="project" value="UniProtKB-UniRule"/>
</dbReference>
<dbReference type="GO" id="GO:0000103">
    <property type="term" value="P:sulfate assimilation"/>
    <property type="evidence" value="ECO:0007669"/>
    <property type="project" value="UniProtKB-UniRule"/>
</dbReference>
<dbReference type="CDD" id="cd23946">
    <property type="entry name" value="Sulfate_adenylyltransferase_2"/>
    <property type="match status" value="1"/>
</dbReference>
<dbReference type="FunFam" id="3.40.50.620:FF:000002">
    <property type="entry name" value="Sulfate adenylyltransferase subunit 2"/>
    <property type="match status" value="1"/>
</dbReference>
<dbReference type="Gene3D" id="3.40.50.620">
    <property type="entry name" value="HUPs"/>
    <property type="match status" value="1"/>
</dbReference>
<dbReference type="HAMAP" id="MF_00064">
    <property type="entry name" value="Sulf_adenylyltr_sub2"/>
    <property type="match status" value="1"/>
</dbReference>
<dbReference type="InterPro" id="IPR002500">
    <property type="entry name" value="PAPS_reduct_dom"/>
</dbReference>
<dbReference type="InterPro" id="IPR014729">
    <property type="entry name" value="Rossmann-like_a/b/a_fold"/>
</dbReference>
<dbReference type="InterPro" id="IPR011784">
    <property type="entry name" value="SO4_adenylTrfase_ssu"/>
</dbReference>
<dbReference type="InterPro" id="IPR050128">
    <property type="entry name" value="Sulfate_adenylyltrnsfr_sub2"/>
</dbReference>
<dbReference type="NCBIfam" id="TIGR02039">
    <property type="entry name" value="CysD"/>
    <property type="match status" value="1"/>
</dbReference>
<dbReference type="NCBIfam" id="NF003587">
    <property type="entry name" value="PRK05253.1"/>
    <property type="match status" value="1"/>
</dbReference>
<dbReference type="NCBIfam" id="NF009214">
    <property type="entry name" value="PRK12563.1"/>
    <property type="match status" value="1"/>
</dbReference>
<dbReference type="PANTHER" id="PTHR43196">
    <property type="entry name" value="SULFATE ADENYLYLTRANSFERASE SUBUNIT 2"/>
    <property type="match status" value="1"/>
</dbReference>
<dbReference type="PANTHER" id="PTHR43196:SF1">
    <property type="entry name" value="SULFATE ADENYLYLTRANSFERASE SUBUNIT 2"/>
    <property type="match status" value="1"/>
</dbReference>
<dbReference type="Pfam" id="PF01507">
    <property type="entry name" value="PAPS_reduct"/>
    <property type="match status" value="1"/>
</dbReference>
<dbReference type="PIRSF" id="PIRSF002936">
    <property type="entry name" value="CysDAde_trans"/>
    <property type="match status" value="1"/>
</dbReference>
<dbReference type="SUPFAM" id="SSF52402">
    <property type="entry name" value="Adenine nucleotide alpha hydrolases-like"/>
    <property type="match status" value="1"/>
</dbReference>
<keyword id="KW-0067">ATP-binding</keyword>
<keyword id="KW-0547">Nucleotide-binding</keyword>
<keyword id="KW-0548">Nucleotidyltransferase</keyword>
<keyword id="KW-0808">Transferase</keyword>
<feature type="chain" id="PRO_1000092197" description="Sulfate adenylyltransferase subunit 2">
    <location>
        <begin position="1"/>
        <end position="304"/>
    </location>
</feature>
<accession>B0V9N5</accession>
<proteinExistence type="inferred from homology"/>
<protein>
    <recommendedName>
        <fullName evidence="1">Sulfate adenylyltransferase subunit 2</fullName>
        <ecNumber evidence="1">2.7.7.4</ecNumber>
    </recommendedName>
    <alternativeName>
        <fullName evidence="1">ATP-sulfurylase small subunit</fullName>
    </alternativeName>
    <alternativeName>
        <fullName evidence="1">Sulfate adenylate transferase</fullName>
        <shortName evidence="1">SAT</shortName>
    </alternativeName>
</protein>
<organism>
    <name type="scientific">Acinetobacter baumannii (strain AYE)</name>
    <dbReference type="NCBI Taxonomy" id="509173"/>
    <lineage>
        <taxon>Bacteria</taxon>
        <taxon>Pseudomonadati</taxon>
        <taxon>Pseudomonadota</taxon>
        <taxon>Gammaproteobacteria</taxon>
        <taxon>Moraxellales</taxon>
        <taxon>Moraxellaceae</taxon>
        <taxon>Acinetobacter</taxon>
        <taxon>Acinetobacter calcoaceticus/baumannii complex</taxon>
    </lineage>
</organism>
<name>CYSD_ACIBY</name>
<comment type="function">
    <text evidence="1">With CysN forms the ATP sulfurylase (ATPS) that catalyzes the adenylation of sulfate producing adenosine 5'-phosphosulfate (APS) and diphosphate, the first enzymatic step in sulfur assimilation pathway. APS synthesis involves the formation of a high-energy phosphoric-sulfuric acid anhydride bond driven by GTP hydrolysis by CysN coupled to ATP hydrolysis by CysD.</text>
</comment>
<comment type="catalytic activity">
    <reaction evidence="1">
        <text>sulfate + ATP + H(+) = adenosine 5'-phosphosulfate + diphosphate</text>
        <dbReference type="Rhea" id="RHEA:18133"/>
        <dbReference type="ChEBI" id="CHEBI:15378"/>
        <dbReference type="ChEBI" id="CHEBI:16189"/>
        <dbReference type="ChEBI" id="CHEBI:30616"/>
        <dbReference type="ChEBI" id="CHEBI:33019"/>
        <dbReference type="ChEBI" id="CHEBI:58243"/>
        <dbReference type="EC" id="2.7.7.4"/>
    </reaction>
</comment>
<comment type="pathway">
    <text evidence="1">Sulfur metabolism; hydrogen sulfide biosynthesis; sulfite from sulfate: step 1/3.</text>
</comment>
<comment type="subunit">
    <text evidence="1">Heterodimer composed of CysD, the smaller subunit, and CysN.</text>
</comment>
<comment type="similarity">
    <text evidence="1">Belongs to the PAPS reductase family. CysD subfamily.</text>
</comment>
<evidence type="ECO:0000255" key="1">
    <source>
        <dbReference type="HAMAP-Rule" id="MF_00064"/>
    </source>
</evidence>
<sequence>MFMTESRLTHLKQLEAESIHIIREVAAEFENPVMLYSIGKDSAVMLHLALKAFYPAKLPFPLLHVDTGWKFKDMIAFRDNMAKTHGFDLIVHQNKEGREAGINPFDHGSSKYTDIMKTQALKQALDKYQFDAAFGGARRDEEKSRAKERVYSFRDSKHRWDPKNQRPELWNLYNGKVNKGESIRVFPLSNWTELDIWQYIYLENIQIVPLYFSAVRPVVERSGTLIMVDDERMRLKEGEVPQMKSVRFRTLGCYPLTGAVESEADTLPEIIQEMLLATSSERQGRMIDHDEAGSMEKKKQEGYF</sequence>